<sequence length="511" mass="57912">MMKMRWLSAAVMLTLYTSSSWAFSIDDVAKQAQSLAGKGYETPKSNLPSVFRDMKYADYQQIQFNHDKAYWNNLKTPFKLEFYHQGMYFDTPVKINEVTATAVKRIKYSPDYFTFGDVQHDKDTVKDLGFAGFKVLYPINSKDKNDEIVSMLGASYFRVIGAGQVYGLSARGLAIDTALPSGEEFPRFKEFWIERPKPTDKRLTIYALLDSPRATGAYKFVVMPGRDTVVDVQSKIYLRDKVGKLGVAPLTSMFLFGPNQPSPANNYRPELHDSNGLSIHAGNGEWIWRPLNNPKHLAVSSFSMENPQGFGLLQRGRDFSRFEDLDDRYDLRPSAWVTPKGEWGKGSVELVEIPTNDETNDNIVAYWTPDQLPEPGKEMNFKYTITFSRDEDKLHAPDNAWVQQTRRSTGDVKQSNLIRQPDGTIAFVVDFTGAEMKKLPEDTPVTAQTSIGDNGEIVESTVRYNPVTKGWRLVMRVKVKDAKKTTEMRAALVNADQTLSETWSYQLPANE</sequence>
<feature type="signal peptide" evidence="1">
    <location>
        <begin position="1"/>
        <end position="22"/>
    </location>
</feature>
<feature type="chain" id="PRO_0000020221" description="Glucans biosynthesis protein G">
    <location>
        <begin position="23"/>
        <end position="511"/>
    </location>
</feature>
<feature type="helix" evidence="4">
    <location>
        <begin position="25"/>
        <end position="36"/>
    </location>
</feature>
<feature type="helix" evidence="4">
    <location>
        <begin position="49"/>
        <end position="52"/>
    </location>
</feature>
<feature type="helix" evidence="4">
    <location>
        <begin position="56"/>
        <end position="59"/>
    </location>
</feature>
<feature type="helix" evidence="4">
    <location>
        <begin position="66"/>
        <end position="68"/>
    </location>
</feature>
<feature type="turn" evidence="4">
    <location>
        <begin position="71"/>
        <end position="73"/>
    </location>
</feature>
<feature type="strand" evidence="4">
    <location>
        <begin position="79"/>
        <end position="83"/>
    </location>
</feature>
<feature type="strand" evidence="4">
    <location>
        <begin position="94"/>
        <end position="98"/>
    </location>
</feature>
<feature type="strand" evidence="4">
    <location>
        <begin position="103"/>
        <end position="105"/>
    </location>
</feature>
<feature type="helix" evidence="4">
    <location>
        <begin position="110"/>
        <end position="112"/>
    </location>
</feature>
<feature type="turn" evidence="3">
    <location>
        <begin position="122"/>
        <end position="124"/>
    </location>
</feature>
<feature type="strand" evidence="4">
    <location>
        <begin position="131"/>
        <end position="137"/>
    </location>
</feature>
<feature type="strand" evidence="4">
    <location>
        <begin position="139"/>
        <end position="141"/>
    </location>
</feature>
<feature type="strand" evidence="4">
    <location>
        <begin position="146"/>
        <end position="153"/>
    </location>
</feature>
<feature type="strand" evidence="4">
    <location>
        <begin position="156"/>
        <end position="159"/>
    </location>
</feature>
<feature type="strand" evidence="4">
    <location>
        <begin position="169"/>
        <end position="176"/>
    </location>
</feature>
<feature type="strand" evidence="4">
    <location>
        <begin position="187"/>
        <end position="194"/>
    </location>
</feature>
<feature type="strand" evidence="4">
    <location>
        <begin position="203"/>
        <end position="211"/>
    </location>
</feature>
<feature type="strand" evidence="4">
    <location>
        <begin position="214"/>
        <end position="223"/>
    </location>
</feature>
<feature type="strand" evidence="4">
    <location>
        <begin position="225"/>
        <end position="240"/>
    </location>
</feature>
<feature type="strand" evidence="4">
    <location>
        <begin position="245"/>
        <end position="252"/>
    </location>
</feature>
<feature type="strand" evidence="4">
    <location>
        <begin position="254"/>
        <end position="257"/>
    </location>
</feature>
<feature type="strand" evidence="4">
    <location>
        <begin position="271"/>
        <end position="273"/>
    </location>
</feature>
<feature type="strand" evidence="4">
    <location>
        <begin position="276"/>
        <end position="280"/>
    </location>
</feature>
<feature type="strand" evidence="4">
    <location>
        <begin position="286"/>
        <end position="290"/>
    </location>
</feature>
<feature type="strand" evidence="4">
    <location>
        <begin position="298"/>
        <end position="306"/>
    </location>
</feature>
<feature type="strand" evidence="4">
    <location>
        <begin position="309"/>
        <end position="313"/>
    </location>
</feature>
<feature type="helix" evidence="4">
    <location>
        <begin position="319"/>
        <end position="321"/>
    </location>
</feature>
<feature type="turn" evidence="4">
    <location>
        <begin position="325"/>
        <end position="327"/>
    </location>
</feature>
<feature type="helix" evidence="4">
    <location>
        <begin position="329"/>
        <end position="331"/>
    </location>
</feature>
<feature type="strand" evidence="4">
    <location>
        <begin position="334"/>
        <end position="341"/>
    </location>
</feature>
<feature type="strand" evidence="4">
    <location>
        <begin position="345"/>
        <end position="352"/>
    </location>
</feature>
<feature type="strand" evidence="4">
    <location>
        <begin position="363"/>
        <end position="371"/>
    </location>
</feature>
<feature type="strand" evidence="4">
    <location>
        <begin position="378"/>
        <end position="389"/>
    </location>
</feature>
<feature type="helix" evidence="4">
    <location>
        <begin position="391"/>
        <end position="394"/>
    </location>
</feature>
<feature type="strand" evidence="4">
    <location>
        <begin position="399"/>
        <end position="413"/>
    </location>
</feature>
<feature type="strand" evidence="4">
    <location>
        <begin position="419"/>
        <end position="432"/>
    </location>
</feature>
<feature type="helix" evidence="4">
    <location>
        <begin position="436"/>
        <end position="438"/>
    </location>
</feature>
<feature type="strand" evidence="4">
    <location>
        <begin position="446"/>
        <end position="451"/>
    </location>
</feature>
<feature type="strand" evidence="4">
    <location>
        <begin position="455"/>
        <end position="465"/>
    </location>
</feature>
<feature type="turn" evidence="4">
    <location>
        <begin position="466"/>
        <end position="469"/>
    </location>
</feature>
<feature type="strand" evidence="4">
    <location>
        <begin position="470"/>
        <end position="480"/>
    </location>
</feature>
<feature type="strand" evidence="4">
    <location>
        <begin position="486"/>
        <end position="493"/>
    </location>
</feature>
<feature type="strand" evidence="4">
    <location>
        <begin position="502"/>
        <end position="507"/>
    </location>
</feature>
<evidence type="ECO:0000269" key="1">
    <source>
    </source>
</evidence>
<evidence type="ECO:0000305" key="2"/>
<evidence type="ECO:0007829" key="3">
    <source>
        <dbReference type="PDB" id="1TXK"/>
    </source>
</evidence>
<evidence type="ECO:0007829" key="4">
    <source>
        <dbReference type="PDB" id="8IP2"/>
    </source>
</evidence>
<name>OPGG_ECOLI</name>
<organism>
    <name type="scientific">Escherichia coli (strain K12)</name>
    <dbReference type="NCBI Taxonomy" id="83333"/>
    <lineage>
        <taxon>Bacteria</taxon>
        <taxon>Pseudomonadati</taxon>
        <taxon>Pseudomonadota</taxon>
        <taxon>Gammaproteobacteria</taxon>
        <taxon>Enterobacterales</taxon>
        <taxon>Enterobacteriaceae</taxon>
        <taxon>Escherichia</taxon>
    </lineage>
</organism>
<comment type="function">
    <text>Involved in the biosynthesis of osmoregulated periplasmic glucans (OPGs).</text>
</comment>
<comment type="pathway">
    <text>Glycan metabolism; osmoregulated periplasmic glucan (OPG) biosynthesis.</text>
</comment>
<comment type="subcellular location">
    <subcellularLocation>
        <location>Periplasm</location>
    </subcellularLocation>
</comment>
<comment type="domain">
    <text>Contains a large N-terminal domain that would serve as the catalytic core subunit, and a smaller C-terminal domain that would act to modulate this enzymatic activity.</text>
</comment>
<comment type="similarity">
    <text evidence="2">Belongs to the OpgD/OpgG family.</text>
</comment>
<proteinExistence type="evidence at protein level"/>
<gene>
    <name type="primary">mdoG</name>
    <name type="synonym">opgG</name>
    <name type="ordered locus">b1048</name>
    <name type="ordered locus">JW1035</name>
</gene>
<dbReference type="EMBL" id="X64197">
    <property type="protein sequence ID" value="CAA45521.1"/>
    <property type="molecule type" value="Genomic_DNA"/>
</dbReference>
<dbReference type="EMBL" id="U00096">
    <property type="protein sequence ID" value="AAC74132.1"/>
    <property type="molecule type" value="Genomic_DNA"/>
</dbReference>
<dbReference type="EMBL" id="AP009048">
    <property type="protein sequence ID" value="BAA35846.1"/>
    <property type="molecule type" value="Genomic_DNA"/>
</dbReference>
<dbReference type="PIR" id="S35417">
    <property type="entry name" value="S35417"/>
</dbReference>
<dbReference type="RefSeq" id="NP_415566.1">
    <property type="nucleotide sequence ID" value="NC_000913.3"/>
</dbReference>
<dbReference type="RefSeq" id="WP_001343212.1">
    <property type="nucleotide sequence ID" value="NZ_SSZK01000058.1"/>
</dbReference>
<dbReference type="PDB" id="1TXK">
    <property type="method" value="X-ray"/>
    <property type="resolution" value="2.50 A"/>
    <property type="chains" value="A/B=23-511"/>
</dbReference>
<dbReference type="PDB" id="8IP2">
    <property type="method" value="X-ray"/>
    <property type="resolution" value="1.81 A"/>
    <property type="chains" value="A=1-511"/>
</dbReference>
<dbReference type="PDBsum" id="1TXK"/>
<dbReference type="PDBsum" id="8IP2"/>
<dbReference type="SMR" id="P33136"/>
<dbReference type="BioGRID" id="4260686">
    <property type="interactions" value="338"/>
</dbReference>
<dbReference type="DIP" id="DIP-10177N"/>
<dbReference type="FunCoup" id="P33136">
    <property type="interactions" value="98"/>
</dbReference>
<dbReference type="IntAct" id="P33136">
    <property type="interactions" value="6"/>
</dbReference>
<dbReference type="STRING" id="511145.b1048"/>
<dbReference type="jPOST" id="P33136"/>
<dbReference type="PaxDb" id="511145-b1048"/>
<dbReference type="EnsemblBacteria" id="AAC74132">
    <property type="protein sequence ID" value="AAC74132"/>
    <property type="gene ID" value="b1048"/>
</dbReference>
<dbReference type="GeneID" id="75203636"/>
<dbReference type="GeneID" id="945005"/>
<dbReference type="KEGG" id="ecj:JW1035"/>
<dbReference type="KEGG" id="eco:b1048"/>
<dbReference type="PATRIC" id="fig|511145.12.peg.1090"/>
<dbReference type="EchoBASE" id="EB1831"/>
<dbReference type="eggNOG" id="COG3131">
    <property type="taxonomic scope" value="Bacteria"/>
</dbReference>
<dbReference type="HOGENOM" id="CLU_023403_2_0_6"/>
<dbReference type="InParanoid" id="P33136"/>
<dbReference type="OMA" id="AYRFVIM"/>
<dbReference type="OrthoDB" id="335750at2"/>
<dbReference type="PhylomeDB" id="P33136"/>
<dbReference type="BioCyc" id="EcoCyc:EG11885-MONOMER"/>
<dbReference type="UniPathway" id="UPA00637"/>
<dbReference type="EvolutionaryTrace" id="P33136"/>
<dbReference type="PRO" id="PR:P33136"/>
<dbReference type="Proteomes" id="UP000000625">
    <property type="component" value="Chromosome"/>
</dbReference>
<dbReference type="GO" id="GO:0030288">
    <property type="term" value="C:outer membrane-bounded periplasmic space"/>
    <property type="evidence" value="ECO:0000318"/>
    <property type="project" value="GO_Central"/>
</dbReference>
<dbReference type="GO" id="GO:0030246">
    <property type="term" value="F:carbohydrate binding"/>
    <property type="evidence" value="ECO:0007669"/>
    <property type="project" value="InterPro"/>
</dbReference>
<dbReference type="GO" id="GO:0003824">
    <property type="term" value="F:catalytic activity"/>
    <property type="evidence" value="ECO:0007669"/>
    <property type="project" value="InterPro"/>
</dbReference>
<dbReference type="GO" id="GO:0051274">
    <property type="term" value="P:beta-glucan biosynthetic process"/>
    <property type="evidence" value="ECO:0000314"/>
    <property type="project" value="EcoCyc"/>
</dbReference>
<dbReference type="FunFam" id="2.60.40.10:FF:000294">
    <property type="entry name" value="Glucans biosynthesis protein G"/>
    <property type="match status" value="1"/>
</dbReference>
<dbReference type="FunFam" id="2.70.98.10:FF:000001">
    <property type="entry name" value="Glucans biosynthesis protein G"/>
    <property type="match status" value="1"/>
</dbReference>
<dbReference type="Gene3D" id="2.70.98.10">
    <property type="match status" value="1"/>
</dbReference>
<dbReference type="Gene3D" id="2.60.40.10">
    <property type="entry name" value="Immunoglobulins"/>
    <property type="match status" value="1"/>
</dbReference>
<dbReference type="HAMAP" id="MF_01069">
    <property type="entry name" value="MdoG_OpgG"/>
    <property type="match status" value="1"/>
</dbReference>
<dbReference type="InterPro" id="IPR011013">
    <property type="entry name" value="Gal_mutarotase_sf_dom"/>
</dbReference>
<dbReference type="InterPro" id="IPR014718">
    <property type="entry name" value="GH-type_carb-bd"/>
</dbReference>
<dbReference type="InterPro" id="IPR014438">
    <property type="entry name" value="Glucan_biosyn_MdoG/MdoD"/>
</dbReference>
<dbReference type="InterPro" id="IPR007444">
    <property type="entry name" value="Glucan_biosyn_MdoG_C"/>
</dbReference>
<dbReference type="InterPro" id="IPR013783">
    <property type="entry name" value="Ig-like_fold"/>
</dbReference>
<dbReference type="InterPro" id="IPR014756">
    <property type="entry name" value="Ig_E-set"/>
</dbReference>
<dbReference type="InterPro" id="IPR023704">
    <property type="entry name" value="MdoG_OpgG"/>
</dbReference>
<dbReference type="PANTHER" id="PTHR30504">
    <property type="entry name" value="GLUCANS BIOSYNTHESIS PROTEIN"/>
    <property type="match status" value="1"/>
</dbReference>
<dbReference type="PANTHER" id="PTHR30504:SF4">
    <property type="entry name" value="GLUCANS BIOSYNTHESIS PROTEIN G"/>
    <property type="match status" value="1"/>
</dbReference>
<dbReference type="Pfam" id="PF04349">
    <property type="entry name" value="MdoG"/>
    <property type="match status" value="1"/>
</dbReference>
<dbReference type="PIRSF" id="PIRSF006281">
    <property type="entry name" value="MdoG"/>
    <property type="match status" value="1"/>
</dbReference>
<dbReference type="SUPFAM" id="SSF81296">
    <property type="entry name" value="E set domains"/>
    <property type="match status" value="1"/>
</dbReference>
<dbReference type="SUPFAM" id="SSF74650">
    <property type="entry name" value="Galactose mutarotase-like"/>
    <property type="match status" value="1"/>
</dbReference>
<accession>P33136</accession>
<reference key="1">
    <citation type="journal article" date="1993" name="Mol. Microbiol.">
        <title>Homology between a genetic locus (mdoA) involved in the osmoregulated biosynthesis of periplasmic glucans in Escherichia coli and a genetic locus (hrpM) controlling pathogenicity of Pseudomonas syringae.</title>
        <authorList>
            <person name="Loubens I."/>
            <person name="Debarbieux L."/>
            <person name="Bohin A."/>
            <person name="Lacroix J.-M."/>
            <person name="Bohin J.-P."/>
        </authorList>
    </citation>
    <scope>NUCLEOTIDE SEQUENCE [GENOMIC DNA]</scope>
    <source>
        <strain>K12</strain>
    </source>
</reference>
<reference key="2">
    <citation type="journal article" date="1996" name="DNA Res.">
        <title>A 718-kb DNA sequence of the Escherichia coli K-12 genome corresponding to the 12.7-28.0 min region on the linkage map.</title>
        <authorList>
            <person name="Oshima T."/>
            <person name="Aiba H."/>
            <person name="Baba T."/>
            <person name="Fujita K."/>
            <person name="Hayashi K."/>
            <person name="Honjo A."/>
            <person name="Ikemoto K."/>
            <person name="Inada T."/>
            <person name="Itoh T."/>
            <person name="Kajihara M."/>
            <person name="Kanai K."/>
            <person name="Kashimoto K."/>
            <person name="Kimura S."/>
            <person name="Kitagawa M."/>
            <person name="Makino K."/>
            <person name="Masuda S."/>
            <person name="Miki T."/>
            <person name="Mizobuchi K."/>
            <person name="Mori H."/>
            <person name="Motomura K."/>
            <person name="Nakamura Y."/>
            <person name="Nashimoto H."/>
            <person name="Nishio Y."/>
            <person name="Saito N."/>
            <person name="Sampei G."/>
            <person name="Seki Y."/>
            <person name="Tagami H."/>
            <person name="Takemoto K."/>
            <person name="Wada C."/>
            <person name="Yamamoto Y."/>
            <person name="Yano M."/>
            <person name="Horiuchi T."/>
        </authorList>
    </citation>
    <scope>NUCLEOTIDE SEQUENCE [LARGE SCALE GENOMIC DNA]</scope>
    <source>
        <strain>K12 / W3110 / ATCC 27325 / DSM 5911</strain>
    </source>
</reference>
<reference key="3">
    <citation type="journal article" date="1997" name="Science">
        <title>The complete genome sequence of Escherichia coli K-12.</title>
        <authorList>
            <person name="Blattner F.R."/>
            <person name="Plunkett G. III"/>
            <person name="Bloch C.A."/>
            <person name="Perna N.T."/>
            <person name="Burland V."/>
            <person name="Riley M."/>
            <person name="Collado-Vides J."/>
            <person name="Glasner J.D."/>
            <person name="Rode C.K."/>
            <person name="Mayhew G.F."/>
            <person name="Gregor J."/>
            <person name="Davis N.W."/>
            <person name="Kirkpatrick H.A."/>
            <person name="Goeden M.A."/>
            <person name="Rose D.J."/>
            <person name="Mau B."/>
            <person name="Shao Y."/>
        </authorList>
    </citation>
    <scope>NUCLEOTIDE SEQUENCE [LARGE SCALE GENOMIC DNA]</scope>
    <source>
        <strain>K12 / MG1655 / ATCC 47076</strain>
    </source>
</reference>
<reference key="4">
    <citation type="journal article" date="2006" name="Mol. Syst. Biol.">
        <title>Highly accurate genome sequences of Escherichia coli K-12 strains MG1655 and W3110.</title>
        <authorList>
            <person name="Hayashi K."/>
            <person name="Morooka N."/>
            <person name="Yamamoto Y."/>
            <person name="Fujita K."/>
            <person name="Isono K."/>
            <person name="Choi S."/>
            <person name="Ohtsubo E."/>
            <person name="Baba T."/>
            <person name="Wanner B.L."/>
            <person name="Mori H."/>
            <person name="Horiuchi T."/>
        </authorList>
    </citation>
    <scope>NUCLEOTIDE SEQUENCE [LARGE SCALE GENOMIC DNA]</scope>
    <source>
        <strain>K12 / W3110 / ATCC 27325 / DSM 5911</strain>
    </source>
</reference>
<reference key="5">
    <citation type="journal article" date="1997" name="Electrophoresis">
        <title>Comparing the predicted and observed properties of proteins encoded in the genome of Escherichia coli K-12.</title>
        <authorList>
            <person name="Link A.J."/>
            <person name="Robison K."/>
            <person name="Church G.M."/>
        </authorList>
    </citation>
    <scope>PROTEIN SEQUENCE OF 23-34</scope>
    <source>
        <strain>K12 / EMG2</strain>
    </source>
</reference>
<reference key="6">
    <citation type="journal article" date="2004" name="J. Mol. Biol.">
        <title>Structural analysis of Escherichia coli OpgG, a protein required for the biosynthesis of osmoregulated periplasmic glucans.</title>
        <authorList>
            <person name="Hanoulle X."/>
            <person name="Rollet E."/>
            <person name="Clantin B."/>
            <person name="Landrieu I."/>
            <person name="Oedberg-Ferragut C."/>
            <person name="Lippens G."/>
            <person name="Bohin J.-P."/>
            <person name="Villeret V."/>
        </authorList>
    </citation>
    <scope>X-RAY CRYSTALLOGRAPHY (2.5 ANGSTROMS) OF 23-511</scope>
</reference>
<keyword id="KW-0002">3D-structure</keyword>
<keyword id="KW-0903">Direct protein sequencing</keyword>
<keyword id="KW-0574">Periplasm</keyword>
<keyword id="KW-1185">Reference proteome</keyword>
<keyword id="KW-0732">Signal</keyword>
<protein>
    <recommendedName>
        <fullName>Glucans biosynthesis protein G</fullName>
    </recommendedName>
</protein>